<sequence length="335" mass="35750">MAAATAPKTMPSSVFAAALLLLAAAACQASPYYPLELGYYRYTCPQAEAIVKASMEKAIAQNPGNGAAVIRMLFHDCFVEGCDASVLLDPTPFSPTPEKLAAPNNPSLRGFELIDAIKDALEAACPGVVSCADIIAFAARDASCFLSQGKVSFDMPSGRLDGTFSNASESVKFLVPPTSNLSDLASSFAVKGMSLEDLVVLSGAHTVGRSHCSSFVSDRLDVPSDINPALAAFLRTRCPPNTTTSDDPTVMQDVVTPNAMDIQYYKNVLSHTVLFTSDAALLTSPETAKLVLDNAKIPGWWEDKFEKAMVKMASLEVKTGHQGQVRKNCRAINHY</sequence>
<evidence type="ECO:0000255" key="1"/>
<evidence type="ECO:0000255" key="2">
    <source>
        <dbReference type="PROSITE-ProRule" id="PRU00297"/>
    </source>
</evidence>
<evidence type="ECO:0000255" key="3">
    <source>
        <dbReference type="PROSITE-ProRule" id="PRU10012"/>
    </source>
</evidence>
<evidence type="ECO:0000269" key="4">
    <source>
    </source>
</evidence>
<evidence type="ECO:0000305" key="5"/>
<proteinExistence type="evidence at transcript level"/>
<reference key="1">
    <citation type="journal article" date="2003" name="Gene">
        <title>Characterisation of maize peroxidases having differential patterns of mRNA accumulation in relation to lignifying tissues.</title>
        <authorList>
            <person name="de Obeso M."/>
            <person name="Caparros-Ruiz D."/>
            <person name="Vignols F."/>
            <person name="Puigdomenech P."/>
            <person name="Rigau J."/>
        </authorList>
    </citation>
    <scope>NUCLEOTIDE SEQUENCE [MRNA]</scope>
    <scope>TISSUE SPECIFICITY</scope>
    <scope>INDUCTION</scope>
    <source>
        <strain>cv. Wisconsin 64A</strain>
    </source>
</reference>
<keyword id="KW-0106">Calcium</keyword>
<keyword id="KW-1015">Disulfide bond</keyword>
<keyword id="KW-0325">Glycoprotein</keyword>
<keyword id="KW-0349">Heme</keyword>
<keyword id="KW-0376">Hydrogen peroxide</keyword>
<keyword id="KW-0408">Iron</keyword>
<keyword id="KW-0479">Metal-binding</keyword>
<keyword id="KW-0560">Oxidoreductase</keyword>
<keyword id="KW-0575">Peroxidase</keyword>
<keyword id="KW-1185">Reference proteome</keyword>
<keyword id="KW-0964">Secreted</keyword>
<keyword id="KW-0732">Signal</keyword>
<feature type="signal peptide" evidence="1">
    <location>
        <begin position="1"/>
        <end position="29"/>
    </location>
</feature>
<feature type="chain" id="PRO_0000359403" description="Peroxidase 2">
    <location>
        <begin position="30"/>
        <end position="335"/>
    </location>
</feature>
<feature type="active site" description="Proton acceptor" evidence="2 3">
    <location>
        <position position="75"/>
    </location>
</feature>
<feature type="binding site" evidence="2">
    <location>
        <position position="76"/>
    </location>
    <ligand>
        <name>Ca(2+)</name>
        <dbReference type="ChEBI" id="CHEBI:29108"/>
        <label>1</label>
    </ligand>
</feature>
<feature type="binding site" evidence="2">
    <location>
        <position position="79"/>
    </location>
    <ligand>
        <name>Ca(2+)</name>
        <dbReference type="ChEBI" id="CHEBI:29108"/>
        <label>1</label>
    </ligand>
</feature>
<feature type="binding site" evidence="2">
    <location>
        <position position="81"/>
    </location>
    <ligand>
        <name>Ca(2+)</name>
        <dbReference type="ChEBI" id="CHEBI:29108"/>
        <label>1</label>
    </ligand>
</feature>
<feature type="binding site" evidence="2">
    <location>
        <position position="83"/>
    </location>
    <ligand>
        <name>Ca(2+)</name>
        <dbReference type="ChEBI" id="CHEBI:29108"/>
        <label>1</label>
    </ligand>
</feature>
<feature type="binding site" evidence="2">
    <location>
        <position position="85"/>
    </location>
    <ligand>
        <name>Ca(2+)</name>
        <dbReference type="ChEBI" id="CHEBI:29108"/>
        <label>1</label>
    </ligand>
</feature>
<feature type="binding site" description="axial binding residue" evidence="2">
    <location>
        <position position="205"/>
    </location>
    <ligand>
        <name>heme b</name>
        <dbReference type="ChEBI" id="CHEBI:60344"/>
    </ligand>
    <ligandPart>
        <name>Fe</name>
        <dbReference type="ChEBI" id="CHEBI:18248"/>
    </ligandPart>
</feature>
<feature type="binding site" evidence="2">
    <location>
        <position position="206"/>
    </location>
    <ligand>
        <name>Ca(2+)</name>
        <dbReference type="ChEBI" id="CHEBI:29108"/>
        <label>2</label>
    </ligand>
</feature>
<feature type="binding site" evidence="2">
    <location>
        <position position="253"/>
    </location>
    <ligand>
        <name>Ca(2+)</name>
        <dbReference type="ChEBI" id="CHEBI:29108"/>
        <label>2</label>
    </ligand>
</feature>
<feature type="binding site" evidence="2">
    <location>
        <position position="256"/>
    </location>
    <ligand>
        <name>Ca(2+)</name>
        <dbReference type="ChEBI" id="CHEBI:29108"/>
        <label>2</label>
    </ligand>
</feature>
<feature type="binding site" evidence="2">
    <location>
        <position position="261"/>
    </location>
    <ligand>
        <name>Ca(2+)</name>
        <dbReference type="ChEBI" id="CHEBI:29108"/>
        <label>2</label>
    </ligand>
</feature>
<feature type="site" description="Transition state stabilizer" evidence="2">
    <location>
        <position position="71"/>
    </location>
</feature>
<feature type="glycosylation site" description="N-linked (GlcNAc...) asparagine" evidence="1">
    <location>
        <position position="166"/>
    </location>
</feature>
<feature type="glycosylation site" description="N-linked (GlcNAc...) asparagine" evidence="1">
    <location>
        <position position="180"/>
    </location>
</feature>
<feature type="glycosylation site" description="N-linked (GlcNAc...) asparagine" evidence="1">
    <location>
        <position position="241"/>
    </location>
</feature>
<feature type="disulfide bond" evidence="2">
    <location>
        <begin position="44"/>
        <end position="125"/>
    </location>
</feature>
<feature type="disulfide bond" evidence="2">
    <location>
        <begin position="77"/>
        <end position="82"/>
    </location>
</feature>
<feature type="disulfide bond" evidence="2">
    <location>
        <begin position="131"/>
        <end position="329"/>
    </location>
</feature>
<feature type="disulfide bond" evidence="2">
    <location>
        <begin position="212"/>
        <end position="238"/>
    </location>
</feature>
<comment type="function">
    <text>Removal of H(2)O(2), oxidation of toxic reductants, biosynthesis and degradation of lignin, suberization, auxin catabolism, response to environmental stresses such as wounding, pathogen attack and oxidative stress. These functions might be dependent on each isozyme/isoform in each plant tissue.</text>
</comment>
<comment type="catalytic activity">
    <reaction>
        <text>2 a phenolic donor + H2O2 = 2 a phenolic radical donor + 2 H2O</text>
        <dbReference type="Rhea" id="RHEA:56136"/>
        <dbReference type="ChEBI" id="CHEBI:15377"/>
        <dbReference type="ChEBI" id="CHEBI:16240"/>
        <dbReference type="ChEBI" id="CHEBI:139520"/>
        <dbReference type="ChEBI" id="CHEBI:139521"/>
        <dbReference type="EC" id="1.11.1.7"/>
    </reaction>
</comment>
<comment type="cofactor">
    <cofactor evidence="2">
        <name>heme b</name>
        <dbReference type="ChEBI" id="CHEBI:60344"/>
    </cofactor>
    <text evidence="2">Binds 1 heme b (iron(II)-protoporphyrin IX) group per subunit.</text>
</comment>
<comment type="cofactor">
    <cofactor evidence="2">
        <name>Ca(2+)</name>
        <dbReference type="ChEBI" id="CHEBI:29108"/>
    </cofactor>
    <text evidence="2">Binds 2 calcium ions per subunit.</text>
</comment>
<comment type="subcellular location">
    <subcellularLocation>
        <location evidence="5">Secreted</location>
    </subcellularLocation>
</comment>
<comment type="tissue specificity">
    <text evidence="4">Expressed in the elongating region of young roots, and in root vascular tissues and epidermis.</text>
</comment>
<comment type="induction">
    <text evidence="4">Induced by wounding and ethylene treatments.</text>
</comment>
<comment type="similarity">
    <text evidence="2">Belongs to the peroxidase family. Classical plant (class III) peroxidase subfamily.</text>
</comment>
<gene>
    <name type="primary">PER2</name>
    <name type="synonym">POX2</name>
    <name type="synonym">PRX2</name>
</gene>
<protein>
    <recommendedName>
        <fullName>Peroxidase 2</fullName>
        <ecNumber>1.11.1.7</ecNumber>
    </recommendedName>
    <alternativeName>
        <fullName>Plasma membrane-bound peroxidase 2</fullName>
        <shortName>pmPOX2</shortName>
    </alternativeName>
</protein>
<name>PER2_MAIZE</name>
<organism>
    <name type="scientific">Zea mays</name>
    <name type="common">Maize</name>
    <dbReference type="NCBI Taxonomy" id="4577"/>
    <lineage>
        <taxon>Eukaryota</taxon>
        <taxon>Viridiplantae</taxon>
        <taxon>Streptophyta</taxon>
        <taxon>Embryophyta</taxon>
        <taxon>Tracheophyta</taxon>
        <taxon>Spermatophyta</taxon>
        <taxon>Magnoliopsida</taxon>
        <taxon>Liliopsida</taxon>
        <taxon>Poales</taxon>
        <taxon>Poaceae</taxon>
        <taxon>PACMAD clade</taxon>
        <taxon>Panicoideae</taxon>
        <taxon>Andropogonodae</taxon>
        <taxon>Andropogoneae</taxon>
        <taxon>Tripsacinae</taxon>
        <taxon>Zea</taxon>
    </lineage>
</organism>
<accession>Q9FEQ8</accession>
<dbReference type="EC" id="1.11.1.7"/>
<dbReference type="EMBL" id="AJ401275">
    <property type="protein sequence ID" value="CAC21392.1"/>
    <property type="molecule type" value="mRNA"/>
</dbReference>
<dbReference type="RefSeq" id="NP_001105580.1">
    <property type="nucleotide sequence ID" value="NM_001112110.1"/>
</dbReference>
<dbReference type="SMR" id="Q9FEQ8"/>
<dbReference type="FunCoup" id="Q9FEQ8">
    <property type="interactions" value="174"/>
</dbReference>
<dbReference type="STRING" id="4577.Q9FEQ8"/>
<dbReference type="PeroxiBase" id="733">
    <property type="entry name" value="ZmPrx02"/>
</dbReference>
<dbReference type="GlyCosmos" id="Q9FEQ8">
    <property type="glycosylation" value="3 sites, No reported glycans"/>
</dbReference>
<dbReference type="PaxDb" id="4577-GRMZM2G040638_P01"/>
<dbReference type="eggNOG" id="ENOG502QPX7">
    <property type="taxonomic scope" value="Eukaryota"/>
</dbReference>
<dbReference type="InParanoid" id="Q9FEQ8"/>
<dbReference type="Proteomes" id="UP000007305">
    <property type="component" value="Unplaced"/>
</dbReference>
<dbReference type="ExpressionAtlas" id="Q9FEQ8">
    <property type="expression patterns" value="baseline and differential"/>
</dbReference>
<dbReference type="GO" id="GO:0005576">
    <property type="term" value="C:extracellular region"/>
    <property type="evidence" value="ECO:0007669"/>
    <property type="project" value="UniProtKB-SubCell"/>
</dbReference>
<dbReference type="GO" id="GO:0009505">
    <property type="term" value="C:plant-type cell wall"/>
    <property type="evidence" value="ECO:0000318"/>
    <property type="project" value="GO_Central"/>
</dbReference>
<dbReference type="GO" id="GO:0020037">
    <property type="term" value="F:heme binding"/>
    <property type="evidence" value="ECO:0007669"/>
    <property type="project" value="InterPro"/>
</dbReference>
<dbReference type="GO" id="GO:0140825">
    <property type="term" value="F:lactoperoxidase activity"/>
    <property type="evidence" value="ECO:0007669"/>
    <property type="project" value="UniProtKB-EC"/>
</dbReference>
<dbReference type="GO" id="GO:0046872">
    <property type="term" value="F:metal ion binding"/>
    <property type="evidence" value="ECO:0007669"/>
    <property type="project" value="UniProtKB-KW"/>
</dbReference>
<dbReference type="GO" id="GO:0004601">
    <property type="term" value="F:peroxidase activity"/>
    <property type="evidence" value="ECO:0000318"/>
    <property type="project" value="GO_Central"/>
</dbReference>
<dbReference type="GO" id="GO:0032922">
    <property type="term" value="P:circadian regulation of gene expression"/>
    <property type="evidence" value="ECO:0000250"/>
    <property type="project" value="UniProtKB"/>
</dbReference>
<dbReference type="GO" id="GO:0042744">
    <property type="term" value="P:hydrogen peroxide catabolic process"/>
    <property type="evidence" value="ECO:0007669"/>
    <property type="project" value="UniProtKB-KW"/>
</dbReference>
<dbReference type="GO" id="GO:0042752">
    <property type="term" value="P:regulation of circadian rhythm"/>
    <property type="evidence" value="ECO:0000250"/>
    <property type="project" value="UniProtKB"/>
</dbReference>
<dbReference type="GO" id="GO:0006979">
    <property type="term" value="P:response to oxidative stress"/>
    <property type="evidence" value="ECO:0007669"/>
    <property type="project" value="InterPro"/>
</dbReference>
<dbReference type="GO" id="GO:0006950">
    <property type="term" value="P:response to stress"/>
    <property type="evidence" value="ECO:0000318"/>
    <property type="project" value="GO_Central"/>
</dbReference>
<dbReference type="CDD" id="cd00693">
    <property type="entry name" value="secretory_peroxidase"/>
    <property type="match status" value="1"/>
</dbReference>
<dbReference type="FunFam" id="1.10.420.10:FF:000006">
    <property type="entry name" value="Peroxidase"/>
    <property type="match status" value="1"/>
</dbReference>
<dbReference type="FunFam" id="1.10.520.10:FF:000006">
    <property type="entry name" value="Peroxidase"/>
    <property type="match status" value="1"/>
</dbReference>
<dbReference type="Gene3D" id="1.10.520.10">
    <property type="match status" value="1"/>
</dbReference>
<dbReference type="Gene3D" id="1.10.420.10">
    <property type="entry name" value="Peroxidase, domain 2"/>
    <property type="match status" value="1"/>
</dbReference>
<dbReference type="InterPro" id="IPR002016">
    <property type="entry name" value="Haem_peroxidase"/>
</dbReference>
<dbReference type="InterPro" id="IPR010255">
    <property type="entry name" value="Haem_peroxidase_sf"/>
</dbReference>
<dbReference type="InterPro" id="IPR000823">
    <property type="entry name" value="Peroxidase_pln"/>
</dbReference>
<dbReference type="InterPro" id="IPR019794">
    <property type="entry name" value="Peroxidases_AS"/>
</dbReference>
<dbReference type="InterPro" id="IPR019793">
    <property type="entry name" value="Peroxidases_heam-ligand_BS"/>
</dbReference>
<dbReference type="InterPro" id="IPR033905">
    <property type="entry name" value="Secretory_peroxidase"/>
</dbReference>
<dbReference type="PANTHER" id="PTHR31235">
    <property type="entry name" value="PEROXIDASE 25-RELATED"/>
    <property type="match status" value="1"/>
</dbReference>
<dbReference type="Pfam" id="PF00141">
    <property type="entry name" value="peroxidase"/>
    <property type="match status" value="1"/>
</dbReference>
<dbReference type="PRINTS" id="PR00458">
    <property type="entry name" value="PEROXIDASE"/>
</dbReference>
<dbReference type="PRINTS" id="PR00461">
    <property type="entry name" value="PLPEROXIDASE"/>
</dbReference>
<dbReference type="SUPFAM" id="SSF48113">
    <property type="entry name" value="Heme-dependent peroxidases"/>
    <property type="match status" value="1"/>
</dbReference>
<dbReference type="PROSITE" id="PS00435">
    <property type="entry name" value="PEROXIDASE_1"/>
    <property type="match status" value="1"/>
</dbReference>
<dbReference type="PROSITE" id="PS00436">
    <property type="entry name" value="PEROXIDASE_2"/>
    <property type="match status" value="1"/>
</dbReference>
<dbReference type="PROSITE" id="PS50873">
    <property type="entry name" value="PEROXIDASE_4"/>
    <property type="match status" value="1"/>
</dbReference>